<protein>
    <recommendedName>
        <fullName evidence="8">Major strawberry allergen Fra a 1-2</fullName>
    </recommendedName>
    <alternativeName>
        <fullName evidence="8">Class 10 plant pathogenesis-related protein Fra a 1.02</fullName>
        <shortName evidence="8">PR10-related protein Fra a 1.02</shortName>
    </alternativeName>
    <allergenName evidence="8">Fra a 1</allergenName>
</protein>
<proteinExistence type="evidence at protein level"/>
<gene>
    <name evidence="7" type="primary">FRAA2</name>
</gene>
<feature type="chain" id="PRO_0000447013" description="Major strawberry allergen Fra a 1-2">
    <location>
        <begin position="1"/>
        <end position="160"/>
    </location>
</feature>
<feature type="strand" evidence="9">
    <location>
        <begin position="2"/>
        <end position="14"/>
    </location>
</feature>
<feature type="helix" evidence="9">
    <location>
        <begin position="16"/>
        <end position="23"/>
    </location>
</feature>
<feature type="turn" evidence="9">
    <location>
        <begin position="24"/>
        <end position="26"/>
    </location>
</feature>
<feature type="helix" evidence="9">
    <location>
        <begin position="27"/>
        <end position="34"/>
    </location>
</feature>
<feature type="turn" evidence="9">
    <location>
        <begin position="36"/>
        <end position="38"/>
    </location>
</feature>
<feature type="strand" evidence="9">
    <location>
        <begin position="39"/>
        <end position="50"/>
    </location>
</feature>
<feature type="strand" evidence="9">
    <location>
        <begin position="54"/>
        <end position="59"/>
    </location>
</feature>
<feature type="helix" evidence="9">
    <location>
        <begin position="61"/>
        <end position="63"/>
    </location>
</feature>
<feature type="strand" evidence="9">
    <location>
        <begin position="67"/>
        <end position="76"/>
    </location>
</feature>
<feature type="helix" evidence="9">
    <location>
        <begin position="77"/>
        <end position="79"/>
    </location>
</feature>
<feature type="strand" evidence="9">
    <location>
        <begin position="81"/>
        <end position="89"/>
    </location>
</feature>
<feature type="strand" evidence="9">
    <location>
        <begin position="94"/>
        <end position="108"/>
    </location>
</feature>
<feature type="strand" evidence="9">
    <location>
        <begin position="113"/>
        <end position="126"/>
    </location>
</feature>
<feature type="helix" evidence="9">
    <location>
        <begin position="131"/>
        <end position="154"/>
    </location>
</feature>
<feature type="turn" evidence="9">
    <location>
        <begin position="156"/>
        <end position="159"/>
    </location>
</feature>
<reference key="1">
    <citation type="journal article" date="2010" name="Mol. Plant">
        <title>The strawberry fruit Fra a allergen functions in flavonoid biosynthesis.</title>
        <authorList>
            <person name="Munoz C."/>
            <person name="Hoffmann T."/>
            <person name="Escobar N.M."/>
            <person name="Ludemann F."/>
            <person name="Botella M.A."/>
            <person name="Valpuesta V."/>
            <person name="Schwab W."/>
        </authorList>
    </citation>
    <scope>NUCLEOTIDE SEQUENCE [MRNA]</scope>
    <scope>TISSUE SPECIFICITY</scope>
</reference>
<reference key="2">
    <citation type="journal article" date="2013" name="J. Biol. Chem.">
        <title>The strawberry pathogenesis-related 10 (PR-10) Fra a proteins control flavonoid biosynthesis by binding to metabolic intermediates.</title>
        <authorList>
            <person name="Casanal A."/>
            <person name="Zander U."/>
            <person name="Munoz C."/>
            <person name="Dupeux F."/>
            <person name="Luque I."/>
            <person name="Botella M.A."/>
            <person name="Schwab W."/>
            <person name="Valpuesta V."/>
            <person name="Marquez J.A."/>
        </authorList>
    </citation>
    <scope>FUNCTION</scope>
</reference>
<reference key="3">
    <citation type="journal article" date="2016" name="J. Agric. Food Chem.">
        <title>Fra a 1.02 is the most potent isoform of the Bet v 1-like allergen in strawberry fruit.</title>
        <authorList>
            <person name="Franz-Oberdorf K."/>
            <person name="Eberlein B."/>
            <person name="Edelmann K."/>
            <person name="Huecherig S."/>
            <person name="Besbes F."/>
            <person name="Darsow U."/>
            <person name="Ring J."/>
            <person name="Schwab W."/>
        </authorList>
    </citation>
    <scope>ALLERGEN</scope>
</reference>
<reference key="4">
    <citation type="journal article" date="2017" name="Int. J. Mol. Sci.">
        <title>Expression Profiling of Strawberry Allergen Fra a during Fruit Ripening Controlled by Exogenous Auxin.</title>
        <authorList>
            <person name="Ishibashi M."/>
            <person name="Yoshikawa H."/>
            <person name="Uno Y."/>
        </authorList>
    </citation>
    <scope>TISSUE SPECIFICITY</scope>
</reference>
<reference key="5">
    <citation type="journal article" date="2017" name="Proteins">
        <title>Physical interaction between the strawberry allergen Fra a 1 and an associated partner FaAP: Interaction of Fra a 1 proteins and FaAP.</title>
        <authorList>
            <person name="Franz-Oberdorf K."/>
            <person name="Langer A."/>
            <person name="Strasser R."/>
            <person name="Isono E."/>
            <person name="Ranftl Q.L."/>
            <person name="Wunschel C."/>
            <person name="Schwab W."/>
        </authorList>
    </citation>
    <scope>SUBUNIT</scope>
    <scope>INTERACTION WITH AP</scope>
</reference>
<reference key="6">
    <citation type="journal article" date="2016" name="Acta Crystallogr. D">
        <title>Automated harvesting and processing of protein crystals through laser photoablation.</title>
        <authorList>
            <person name="Zander U."/>
            <person name="Hoffmann G."/>
            <person name="Cornaciu I."/>
            <person name="Marquette J.-P."/>
            <person name="Papp G."/>
            <person name="Landret C."/>
            <person name="Seroul G."/>
            <person name="Sinoir J."/>
            <person name="Roewer M."/>
            <person name="Felisaz F."/>
            <person name="Rodriguez-Puente S."/>
            <person name="Mariaule V."/>
            <person name="Murphy P."/>
            <person name="Mathieu M."/>
            <person name="Cipriani F."/>
            <person name="Marquez J.A."/>
        </authorList>
    </citation>
    <scope>X-RAY CRYSTALLOGRAPHY (1.90 ANGSTROMS) OF 2-160</scope>
</reference>
<accession>D0E0C6</accession>
<keyword id="KW-0002">3D-structure</keyword>
<keyword id="KW-0020">Allergen</keyword>
<keyword id="KW-0284">Flavonoid biosynthesis</keyword>
<keyword id="KW-0568">Pathogenesis-related protein</keyword>
<keyword id="KW-0611">Plant defense</keyword>
<name>FRA12_FRAAN</name>
<comment type="function">
    <text evidence="1 3">Involved in the control of flavonoid biosynthesis in fruits, probably by binding directly to natural flavonoids (By similarity). Binds the natural flavonoid myricetin with affinities in the low micromolar range (PubMed:24133217).</text>
</comment>
<comment type="subunit">
    <text evidence="6">Monomer (PubMed:28656626). Interacts with AP (PubMed:28656626).</text>
</comment>
<comment type="tissue specificity">
    <text evidence="2 5">Highly expressed in ripe red fruits (PubMed:19969523, PubMed:28574483). Expressed in roots and white fruits (PubMed:19969523). Expressed at low levels in open flowers (PubMed:19969523).</text>
</comment>
<comment type="allergen">
    <text evidence="4">May cause an allergic reaction in human (PubMed:27086707). Binds to IgE of patients allergic to birch Bet v 1 (PubMed:27086707). Causes degranulation of basophils sensitized with IgE of patients allergic to birch Bet v 1 (PubMed:27086707).</text>
</comment>
<comment type="similarity">
    <text evidence="8">Belongs to the BetVI family.</text>
</comment>
<dbReference type="EMBL" id="GQ148818">
    <property type="protein sequence ID" value="ACX47057.1"/>
    <property type="molecule type" value="mRNA"/>
</dbReference>
<dbReference type="PDB" id="5AMW">
    <property type="method" value="X-ray"/>
    <property type="resolution" value="1.90 A"/>
    <property type="chains" value="A/B=2-160"/>
</dbReference>
<dbReference type="PDB" id="6ST8">
    <property type="method" value="X-ray"/>
    <property type="resolution" value="2.04 A"/>
    <property type="chains" value="A/B=2-160"/>
</dbReference>
<dbReference type="PDB" id="6ST9">
    <property type="method" value="X-ray"/>
    <property type="resolution" value="1.97 A"/>
    <property type="chains" value="A/B=2-160"/>
</dbReference>
<dbReference type="PDB" id="6STA">
    <property type="method" value="X-ray"/>
    <property type="resolution" value="2.19 A"/>
    <property type="chains" value="A/B=2-160"/>
</dbReference>
<dbReference type="PDB" id="6STB">
    <property type="method" value="X-ray"/>
    <property type="resolution" value="2.27 A"/>
    <property type="chains" value="A/B=2-160"/>
</dbReference>
<dbReference type="PDBsum" id="5AMW"/>
<dbReference type="PDBsum" id="6ST8"/>
<dbReference type="PDBsum" id="6ST9"/>
<dbReference type="PDBsum" id="6STA"/>
<dbReference type="PDBsum" id="6STB"/>
<dbReference type="SMR" id="D0E0C6"/>
<dbReference type="Allergome" id="2124">
    <property type="allergen name" value="Fra a 1"/>
</dbReference>
<dbReference type="EvolutionaryTrace" id="D0E0C6"/>
<dbReference type="GO" id="GO:0005737">
    <property type="term" value="C:cytoplasm"/>
    <property type="evidence" value="ECO:0007669"/>
    <property type="project" value="TreeGrafter"/>
</dbReference>
<dbReference type="GO" id="GO:0005634">
    <property type="term" value="C:nucleus"/>
    <property type="evidence" value="ECO:0007669"/>
    <property type="project" value="TreeGrafter"/>
</dbReference>
<dbReference type="GO" id="GO:0010427">
    <property type="term" value="F:abscisic acid binding"/>
    <property type="evidence" value="ECO:0007669"/>
    <property type="project" value="InterPro"/>
</dbReference>
<dbReference type="GO" id="GO:0004864">
    <property type="term" value="F:protein phosphatase inhibitor activity"/>
    <property type="evidence" value="ECO:0007669"/>
    <property type="project" value="InterPro"/>
</dbReference>
<dbReference type="GO" id="GO:0038023">
    <property type="term" value="F:signaling receptor activity"/>
    <property type="evidence" value="ECO:0007669"/>
    <property type="project" value="InterPro"/>
</dbReference>
<dbReference type="GO" id="GO:0009738">
    <property type="term" value="P:abscisic acid-activated signaling pathway"/>
    <property type="evidence" value="ECO:0007669"/>
    <property type="project" value="InterPro"/>
</dbReference>
<dbReference type="GO" id="GO:0006952">
    <property type="term" value="P:defense response"/>
    <property type="evidence" value="ECO:0007669"/>
    <property type="project" value="UniProtKB-KW"/>
</dbReference>
<dbReference type="GO" id="GO:0009813">
    <property type="term" value="P:flavonoid biosynthetic process"/>
    <property type="evidence" value="ECO:0007669"/>
    <property type="project" value="UniProtKB-KW"/>
</dbReference>
<dbReference type="CDD" id="cd07816">
    <property type="entry name" value="Bet_v1-like"/>
    <property type="match status" value="1"/>
</dbReference>
<dbReference type="FunFam" id="3.30.530.20:FF:000007">
    <property type="entry name" value="Major pollen allergen Bet v 1-A"/>
    <property type="match status" value="1"/>
</dbReference>
<dbReference type="Gene3D" id="3.30.530.20">
    <property type="match status" value="1"/>
</dbReference>
<dbReference type="InterPro" id="IPR000916">
    <property type="entry name" value="Bet_v_I/MLP"/>
</dbReference>
<dbReference type="InterPro" id="IPR024949">
    <property type="entry name" value="Bet_v_I_allergen"/>
</dbReference>
<dbReference type="InterPro" id="IPR050279">
    <property type="entry name" value="Plant_def-hormone_signal"/>
</dbReference>
<dbReference type="InterPro" id="IPR023393">
    <property type="entry name" value="START-like_dom_sf"/>
</dbReference>
<dbReference type="PANTHER" id="PTHR31213">
    <property type="entry name" value="OS08G0374000 PROTEIN-RELATED"/>
    <property type="match status" value="1"/>
</dbReference>
<dbReference type="PANTHER" id="PTHR31213:SF55">
    <property type="entry name" value="STRESS-INDUCED PROTEIN SAM22"/>
    <property type="match status" value="1"/>
</dbReference>
<dbReference type="Pfam" id="PF00407">
    <property type="entry name" value="Bet_v_1"/>
    <property type="match status" value="1"/>
</dbReference>
<dbReference type="PRINTS" id="PR00634">
    <property type="entry name" value="BETALLERGEN"/>
</dbReference>
<dbReference type="SUPFAM" id="SSF55961">
    <property type="entry name" value="Bet v1-like"/>
    <property type="match status" value="1"/>
</dbReference>
<dbReference type="PROSITE" id="PS00451">
    <property type="entry name" value="PATHOGENESIS_BETVI"/>
    <property type="match status" value="1"/>
</dbReference>
<organism>
    <name type="scientific">Fragaria ananassa</name>
    <name type="common">Strawberry</name>
    <name type="synonym">Fragaria chiloensis x Fragaria virginiana</name>
    <dbReference type="NCBI Taxonomy" id="3747"/>
    <lineage>
        <taxon>Eukaryota</taxon>
        <taxon>Viridiplantae</taxon>
        <taxon>Streptophyta</taxon>
        <taxon>Embryophyta</taxon>
        <taxon>Tracheophyta</taxon>
        <taxon>Spermatophyta</taxon>
        <taxon>Magnoliopsida</taxon>
        <taxon>eudicotyledons</taxon>
        <taxon>Gunneridae</taxon>
        <taxon>Pentapetalae</taxon>
        <taxon>rosids</taxon>
        <taxon>fabids</taxon>
        <taxon>Rosales</taxon>
        <taxon>Rosaceae</taxon>
        <taxon>Rosoideae</taxon>
        <taxon>Potentilleae</taxon>
        <taxon>Fragariinae</taxon>
        <taxon>Fragaria</taxon>
    </lineage>
</organism>
<sequence length="160" mass="17499">MGVFTYETEFTSVIPPPRLFKAFILDADNLIPKIAPQAVKCAEIIEGDGGVGTIKKITFGEGSQFGSVTHKIDGIDKENFVYSYSLIEGDALSDKIEKISYETKLVSSSDGGSIIKSTSNYHTKGDVEIKEEHVKAGKEKASHLFKLVEGYLLANPNEYC</sequence>
<evidence type="ECO:0000250" key="1">
    <source>
        <dbReference type="UniProtKB" id="D0E0C7"/>
    </source>
</evidence>
<evidence type="ECO:0000269" key="2">
    <source>
    </source>
</evidence>
<evidence type="ECO:0000269" key="3">
    <source>
    </source>
</evidence>
<evidence type="ECO:0000269" key="4">
    <source>
    </source>
</evidence>
<evidence type="ECO:0000269" key="5">
    <source>
    </source>
</evidence>
<evidence type="ECO:0000269" key="6">
    <source>
    </source>
</evidence>
<evidence type="ECO:0000303" key="7">
    <source>
    </source>
</evidence>
<evidence type="ECO:0000305" key="8"/>
<evidence type="ECO:0007829" key="9">
    <source>
        <dbReference type="PDB" id="5AMW"/>
    </source>
</evidence>